<reference key="1">
    <citation type="journal article" date="2012" name="BMC Genomics">
        <title>Comparative genomics and transcriptomics of lineages I, II, and III strains of Listeria monocytogenes.</title>
        <authorList>
            <person name="Hain T."/>
            <person name="Ghai R."/>
            <person name="Billion A."/>
            <person name="Kuenne C.T."/>
            <person name="Steinweg C."/>
            <person name="Izar B."/>
            <person name="Mohamed W."/>
            <person name="Mraheil M."/>
            <person name="Domann E."/>
            <person name="Schaffrath S."/>
            <person name="Karst U."/>
            <person name="Goesmann A."/>
            <person name="Oehm S."/>
            <person name="Puhler A."/>
            <person name="Merkl R."/>
            <person name="Vorwerk S."/>
            <person name="Glaser P."/>
            <person name="Garrido P."/>
            <person name="Rusniok C."/>
            <person name="Buchrieser C."/>
            <person name="Goebel W."/>
            <person name="Chakraborty T."/>
        </authorList>
    </citation>
    <scope>NUCLEOTIDE SEQUENCE [LARGE SCALE GENOMIC DNA]</scope>
    <source>
        <strain>CLIP80459</strain>
    </source>
</reference>
<gene>
    <name type="ordered locus">Lm4b_02365</name>
</gene>
<comment type="similarity">
    <text evidence="1">Belongs to the UPF0349 family.</text>
</comment>
<feature type="chain" id="PRO_1000215432" description="UPF0349 protein Lm4b_02365">
    <location>
        <begin position="1"/>
        <end position="77"/>
    </location>
</feature>
<evidence type="ECO:0000255" key="1">
    <source>
        <dbReference type="HAMAP-Rule" id="MF_01542"/>
    </source>
</evidence>
<name>Y2365_LISMC</name>
<dbReference type="EMBL" id="FM242711">
    <property type="protein sequence ID" value="CAS06121.1"/>
    <property type="molecule type" value="Genomic_DNA"/>
</dbReference>
<dbReference type="RefSeq" id="WP_003725587.1">
    <property type="nucleotide sequence ID" value="NC_012488.1"/>
</dbReference>
<dbReference type="SMR" id="C1KY36"/>
<dbReference type="KEGG" id="lmc:Lm4b_02365"/>
<dbReference type="HOGENOM" id="CLU_182025_0_0_9"/>
<dbReference type="HAMAP" id="MF_01542">
    <property type="entry name" value="UPF0349"/>
    <property type="match status" value="1"/>
</dbReference>
<dbReference type="InterPro" id="IPR009910">
    <property type="entry name" value="DUF1450"/>
</dbReference>
<dbReference type="InterPro" id="IPR022916">
    <property type="entry name" value="UPF0349"/>
</dbReference>
<dbReference type="NCBIfam" id="NF010190">
    <property type="entry name" value="PRK13669.1"/>
    <property type="match status" value="1"/>
</dbReference>
<dbReference type="Pfam" id="PF07293">
    <property type="entry name" value="DUF1450"/>
    <property type="match status" value="1"/>
</dbReference>
<protein>
    <recommendedName>
        <fullName evidence="1">UPF0349 protein Lm4b_02365</fullName>
    </recommendedName>
</protein>
<sequence length="77" mass="8389">MNPIVEFCVNNLASGADAAFAKLDADDSLDVIEYDCLTYCDLCATSLFALVDGEVVRGETAEELVANIYTFLEENPF</sequence>
<organism>
    <name type="scientific">Listeria monocytogenes serotype 4b (strain CLIP80459)</name>
    <dbReference type="NCBI Taxonomy" id="568819"/>
    <lineage>
        <taxon>Bacteria</taxon>
        <taxon>Bacillati</taxon>
        <taxon>Bacillota</taxon>
        <taxon>Bacilli</taxon>
        <taxon>Bacillales</taxon>
        <taxon>Listeriaceae</taxon>
        <taxon>Listeria</taxon>
    </lineage>
</organism>
<accession>C1KY36</accession>
<proteinExistence type="inferred from homology"/>